<dbReference type="EC" id="2.1.1.192" evidence="1"/>
<dbReference type="EMBL" id="CP000462">
    <property type="protein sequence ID" value="ABK38312.1"/>
    <property type="molecule type" value="Genomic_DNA"/>
</dbReference>
<dbReference type="RefSeq" id="WP_011705642.1">
    <property type="nucleotide sequence ID" value="NC_008570.1"/>
</dbReference>
<dbReference type="RefSeq" id="YP_856292.1">
    <property type="nucleotide sequence ID" value="NC_008570.1"/>
</dbReference>
<dbReference type="SMR" id="A0KJ41"/>
<dbReference type="STRING" id="380703.AHA_1756"/>
<dbReference type="EnsemblBacteria" id="ABK38312">
    <property type="protein sequence ID" value="ABK38312"/>
    <property type="gene ID" value="AHA_1756"/>
</dbReference>
<dbReference type="GeneID" id="4490286"/>
<dbReference type="KEGG" id="aha:AHA_1756"/>
<dbReference type="PATRIC" id="fig|380703.7.peg.1771"/>
<dbReference type="eggNOG" id="COG0820">
    <property type="taxonomic scope" value="Bacteria"/>
</dbReference>
<dbReference type="HOGENOM" id="CLU_029101_0_0_6"/>
<dbReference type="OrthoDB" id="9793973at2"/>
<dbReference type="Proteomes" id="UP000000756">
    <property type="component" value="Chromosome"/>
</dbReference>
<dbReference type="GO" id="GO:0005737">
    <property type="term" value="C:cytoplasm"/>
    <property type="evidence" value="ECO:0007669"/>
    <property type="project" value="UniProtKB-SubCell"/>
</dbReference>
<dbReference type="GO" id="GO:0051539">
    <property type="term" value="F:4 iron, 4 sulfur cluster binding"/>
    <property type="evidence" value="ECO:0007669"/>
    <property type="project" value="UniProtKB-UniRule"/>
</dbReference>
<dbReference type="GO" id="GO:0046872">
    <property type="term" value="F:metal ion binding"/>
    <property type="evidence" value="ECO:0007669"/>
    <property type="project" value="UniProtKB-KW"/>
</dbReference>
<dbReference type="GO" id="GO:0070040">
    <property type="term" value="F:rRNA (adenine(2503)-C2-)-methyltransferase activity"/>
    <property type="evidence" value="ECO:0007669"/>
    <property type="project" value="UniProtKB-UniRule"/>
</dbReference>
<dbReference type="GO" id="GO:0019843">
    <property type="term" value="F:rRNA binding"/>
    <property type="evidence" value="ECO:0007669"/>
    <property type="project" value="UniProtKB-UniRule"/>
</dbReference>
<dbReference type="GO" id="GO:0002935">
    <property type="term" value="F:tRNA (adenine(37)-C2)-methyltransferase activity"/>
    <property type="evidence" value="ECO:0007669"/>
    <property type="project" value="UniProtKB-UniRule"/>
</dbReference>
<dbReference type="GO" id="GO:0000049">
    <property type="term" value="F:tRNA binding"/>
    <property type="evidence" value="ECO:0007669"/>
    <property type="project" value="UniProtKB-UniRule"/>
</dbReference>
<dbReference type="GO" id="GO:0070475">
    <property type="term" value="P:rRNA base methylation"/>
    <property type="evidence" value="ECO:0007669"/>
    <property type="project" value="UniProtKB-UniRule"/>
</dbReference>
<dbReference type="GO" id="GO:0030488">
    <property type="term" value="P:tRNA methylation"/>
    <property type="evidence" value="ECO:0007669"/>
    <property type="project" value="UniProtKB-UniRule"/>
</dbReference>
<dbReference type="CDD" id="cd01335">
    <property type="entry name" value="Radical_SAM"/>
    <property type="match status" value="1"/>
</dbReference>
<dbReference type="FunFam" id="1.10.150.530:FF:000003">
    <property type="entry name" value="Dual-specificity RNA methyltransferase RlmN"/>
    <property type="match status" value="1"/>
</dbReference>
<dbReference type="FunFam" id="3.20.20.70:FF:000008">
    <property type="entry name" value="Dual-specificity RNA methyltransferase RlmN"/>
    <property type="match status" value="1"/>
</dbReference>
<dbReference type="Gene3D" id="1.10.150.530">
    <property type="match status" value="1"/>
</dbReference>
<dbReference type="Gene3D" id="3.20.20.70">
    <property type="entry name" value="Aldolase class I"/>
    <property type="match status" value="1"/>
</dbReference>
<dbReference type="HAMAP" id="MF_01849">
    <property type="entry name" value="RNA_methyltr_RlmN"/>
    <property type="match status" value="1"/>
</dbReference>
<dbReference type="InterPro" id="IPR013785">
    <property type="entry name" value="Aldolase_TIM"/>
</dbReference>
<dbReference type="InterPro" id="IPR040072">
    <property type="entry name" value="Methyltransferase_A"/>
</dbReference>
<dbReference type="InterPro" id="IPR048641">
    <property type="entry name" value="RlmN_N"/>
</dbReference>
<dbReference type="InterPro" id="IPR027492">
    <property type="entry name" value="RNA_MTrfase_RlmN"/>
</dbReference>
<dbReference type="InterPro" id="IPR004383">
    <property type="entry name" value="rRNA_lsu_MTrfase_RlmN/Cfr"/>
</dbReference>
<dbReference type="InterPro" id="IPR007197">
    <property type="entry name" value="rSAM"/>
</dbReference>
<dbReference type="NCBIfam" id="NF008396">
    <property type="entry name" value="PRK11194.1"/>
    <property type="match status" value="1"/>
</dbReference>
<dbReference type="NCBIfam" id="TIGR00048">
    <property type="entry name" value="rRNA_mod_RlmN"/>
    <property type="match status" value="1"/>
</dbReference>
<dbReference type="PANTHER" id="PTHR30544">
    <property type="entry name" value="23S RRNA METHYLTRANSFERASE"/>
    <property type="match status" value="1"/>
</dbReference>
<dbReference type="PANTHER" id="PTHR30544:SF5">
    <property type="entry name" value="RADICAL SAM CORE DOMAIN-CONTAINING PROTEIN"/>
    <property type="match status" value="1"/>
</dbReference>
<dbReference type="Pfam" id="PF04055">
    <property type="entry name" value="Radical_SAM"/>
    <property type="match status" value="1"/>
</dbReference>
<dbReference type="Pfam" id="PF21016">
    <property type="entry name" value="RlmN_N"/>
    <property type="match status" value="1"/>
</dbReference>
<dbReference type="PIRSF" id="PIRSF006004">
    <property type="entry name" value="CHP00048"/>
    <property type="match status" value="1"/>
</dbReference>
<dbReference type="SFLD" id="SFLDF00275">
    <property type="entry name" value="adenosine_C2_methyltransferase"/>
    <property type="match status" value="1"/>
</dbReference>
<dbReference type="SFLD" id="SFLDG01062">
    <property type="entry name" value="methyltransferase_(Class_A)"/>
    <property type="match status" value="1"/>
</dbReference>
<dbReference type="SUPFAM" id="SSF102114">
    <property type="entry name" value="Radical SAM enzymes"/>
    <property type="match status" value="1"/>
</dbReference>
<dbReference type="PROSITE" id="PS51918">
    <property type="entry name" value="RADICAL_SAM"/>
    <property type="match status" value="1"/>
</dbReference>
<comment type="function">
    <text evidence="1">Specifically methylates position 2 of adenine 2503 in 23S rRNA and position 2 of adenine 37 in tRNAs. m2A2503 modification seems to play a crucial role in the proofreading step occurring at the peptidyl transferase center and thus would serve to optimize ribosomal fidelity.</text>
</comment>
<comment type="catalytic activity">
    <reaction evidence="1">
        <text>adenosine(2503) in 23S rRNA + 2 reduced [2Fe-2S]-[ferredoxin] + 2 S-adenosyl-L-methionine = 2-methyladenosine(2503) in 23S rRNA + 5'-deoxyadenosine + L-methionine + 2 oxidized [2Fe-2S]-[ferredoxin] + S-adenosyl-L-homocysteine</text>
        <dbReference type="Rhea" id="RHEA:42916"/>
        <dbReference type="Rhea" id="RHEA-COMP:10000"/>
        <dbReference type="Rhea" id="RHEA-COMP:10001"/>
        <dbReference type="Rhea" id="RHEA-COMP:10152"/>
        <dbReference type="Rhea" id="RHEA-COMP:10282"/>
        <dbReference type="ChEBI" id="CHEBI:17319"/>
        <dbReference type="ChEBI" id="CHEBI:33737"/>
        <dbReference type="ChEBI" id="CHEBI:33738"/>
        <dbReference type="ChEBI" id="CHEBI:57844"/>
        <dbReference type="ChEBI" id="CHEBI:57856"/>
        <dbReference type="ChEBI" id="CHEBI:59789"/>
        <dbReference type="ChEBI" id="CHEBI:74411"/>
        <dbReference type="ChEBI" id="CHEBI:74497"/>
        <dbReference type="EC" id="2.1.1.192"/>
    </reaction>
</comment>
<comment type="catalytic activity">
    <reaction evidence="1">
        <text>adenosine(37) in tRNA + 2 reduced [2Fe-2S]-[ferredoxin] + 2 S-adenosyl-L-methionine = 2-methyladenosine(37) in tRNA + 5'-deoxyadenosine + L-methionine + 2 oxidized [2Fe-2S]-[ferredoxin] + S-adenosyl-L-homocysteine</text>
        <dbReference type="Rhea" id="RHEA:43332"/>
        <dbReference type="Rhea" id="RHEA-COMP:10000"/>
        <dbReference type="Rhea" id="RHEA-COMP:10001"/>
        <dbReference type="Rhea" id="RHEA-COMP:10162"/>
        <dbReference type="Rhea" id="RHEA-COMP:10485"/>
        <dbReference type="ChEBI" id="CHEBI:17319"/>
        <dbReference type="ChEBI" id="CHEBI:33737"/>
        <dbReference type="ChEBI" id="CHEBI:33738"/>
        <dbReference type="ChEBI" id="CHEBI:57844"/>
        <dbReference type="ChEBI" id="CHEBI:57856"/>
        <dbReference type="ChEBI" id="CHEBI:59789"/>
        <dbReference type="ChEBI" id="CHEBI:74411"/>
        <dbReference type="ChEBI" id="CHEBI:74497"/>
        <dbReference type="EC" id="2.1.1.192"/>
    </reaction>
</comment>
<comment type="cofactor">
    <cofactor evidence="1">
        <name>[4Fe-4S] cluster</name>
        <dbReference type="ChEBI" id="CHEBI:49883"/>
    </cofactor>
    <text evidence="1">Binds 1 [4Fe-4S] cluster. The cluster is coordinated with 3 cysteines and an exchangeable S-adenosyl-L-methionine.</text>
</comment>
<comment type="subcellular location">
    <subcellularLocation>
        <location evidence="1">Cytoplasm</location>
    </subcellularLocation>
</comment>
<comment type="miscellaneous">
    <text evidence="1">Reaction proceeds by a ping-pong mechanism involving intermediate methylation of a conserved cysteine residue.</text>
</comment>
<comment type="similarity">
    <text evidence="1">Belongs to the radical SAM superfamily. RlmN family.</text>
</comment>
<evidence type="ECO:0000255" key="1">
    <source>
        <dbReference type="HAMAP-Rule" id="MF_01849"/>
    </source>
</evidence>
<evidence type="ECO:0000255" key="2">
    <source>
        <dbReference type="PROSITE-ProRule" id="PRU01266"/>
    </source>
</evidence>
<gene>
    <name evidence="1" type="primary">rlmN</name>
    <name type="ordered locus">AHA_1756</name>
</gene>
<accession>A0KJ41</accession>
<name>RLMN_AERHH</name>
<proteinExistence type="inferred from homology"/>
<organism>
    <name type="scientific">Aeromonas hydrophila subsp. hydrophila (strain ATCC 7966 / DSM 30187 / BCRC 13018 / CCUG 14551 / JCM 1027 / KCTC 2358 / NCIMB 9240 / NCTC 8049)</name>
    <dbReference type="NCBI Taxonomy" id="380703"/>
    <lineage>
        <taxon>Bacteria</taxon>
        <taxon>Pseudomonadati</taxon>
        <taxon>Pseudomonadota</taxon>
        <taxon>Gammaproteobacteria</taxon>
        <taxon>Aeromonadales</taxon>
        <taxon>Aeromonadaceae</taxon>
        <taxon>Aeromonas</taxon>
    </lineage>
</organism>
<sequence>MSETKTNLLDLDRDAMRAFFVELGEKPFRADQVMKWIYHFGCDDFDQMNNVNKVLRERLKAIAEIRAPEVSREQRSSDGTIKWALQVGGQEVETVYIPEEDRATLCVSSQVGCALECKFCSTAQQGFNRNLKVSEIIGQVWRAAKIVGGKRPITNVVMMGMGEPLLNLANVVPAMRLMMDDFGYGISKRRVTISTSGVVPALDMLGDQIDVALAISLHAPNDKLRSEIMPINDKYNIEEFLAGVRRYLGKSNANGGRVTVEYVLLDHINDDMQHAHELAKVLKDTPSKINLIPFNPFPGNPYGKPSNSRIDRFSKVLMEYGFTVIVRKTRGDDIDAACGQLVGEVIDRTKRTMKNRMQQDGISVKMV</sequence>
<keyword id="KW-0004">4Fe-4S</keyword>
<keyword id="KW-0963">Cytoplasm</keyword>
<keyword id="KW-1015">Disulfide bond</keyword>
<keyword id="KW-0408">Iron</keyword>
<keyword id="KW-0411">Iron-sulfur</keyword>
<keyword id="KW-0479">Metal-binding</keyword>
<keyword id="KW-0489">Methyltransferase</keyword>
<keyword id="KW-1185">Reference proteome</keyword>
<keyword id="KW-0698">rRNA processing</keyword>
<keyword id="KW-0949">S-adenosyl-L-methionine</keyword>
<keyword id="KW-0808">Transferase</keyword>
<keyword id="KW-0819">tRNA processing</keyword>
<feature type="chain" id="PRO_0000350004" description="Dual-specificity RNA methyltransferase RlmN">
    <location>
        <begin position="1"/>
        <end position="367"/>
    </location>
</feature>
<feature type="domain" description="Radical SAM core" evidence="2">
    <location>
        <begin position="99"/>
        <end position="333"/>
    </location>
</feature>
<feature type="active site" description="Proton acceptor" evidence="1">
    <location>
        <position position="93"/>
    </location>
</feature>
<feature type="active site" description="S-methylcysteine intermediate" evidence="1">
    <location>
        <position position="338"/>
    </location>
</feature>
<feature type="binding site" evidence="1">
    <location>
        <position position="113"/>
    </location>
    <ligand>
        <name>[4Fe-4S] cluster</name>
        <dbReference type="ChEBI" id="CHEBI:49883"/>
        <note>4Fe-4S-S-AdoMet</note>
    </ligand>
</feature>
<feature type="binding site" evidence="1">
    <location>
        <position position="117"/>
    </location>
    <ligand>
        <name>[4Fe-4S] cluster</name>
        <dbReference type="ChEBI" id="CHEBI:49883"/>
        <note>4Fe-4S-S-AdoMet</note>
    </ligand>
</feature>
<feature type="binding site" evidence="1">
    <location>
        <position position="120"/>
    </location>
    <ligand>
        <name>[4Fe-4S] cluster</name>
        <dbReference type="ChEBI" id="CHEBI:49883"/>
        <note>4Fe-4S-S-AdoMet</note>
    </ligand>
</feature>
<feature type="binding site" evidence="1">
    <location>
        <begin position="162"/>
        <end position="163"/>
    </location>
    <ligand>
        <name>S-adenosyl-L-methionine</name>
        <dbReference type="ChEBI" id="CHEBI:59789"/>
    </ligand>
</feature>
<feature type="binding site" evidence="1">
    <location>
        <position position="194"/>
    </location>
    <ligand>
        <name>S-adenosyl-L-methionine</name>
        <dbReference type="ChEBI" id="CHEBI:59789"/>
    </ligand>
</feature>
<feature type="binding site" evidence="1">
    <location>
        <begin position="216"/>
        <end position="218"/>
    </location>
    <ligand>
        <name>S-adenosyl-L-methionine</name>
        <dbReference type="ChEBI" id="CHEBI:59789"/>
    </ligand>
</feature>
<feature type="binding site" evidence="1">
    <location>
        <position position="295"/>
    </location>
    <ligand>
        <name>S-adenosyl-L-methionine</name>
        <dbReference type="ChEBI" id="CHEBI:59789"/>
    </ligand>
</feature>
<feature type="disulfide bond" description="(transient)" evidence="1">
    <location>
        <begin position="106"/>
        <end position="338"/>
    </location>
</feature>
<protein>
    <recommendedName>
        <fullName evidence="1">Dual-specificity RNA methyltransferase RlmN</fullName>
        <ecNumber evidence="1">2.1.1.192</ecNumber>
    </recommendedName>
    <alternativeName>
        <fullName evidence="1">23S rRNA (adenine(2503)-C(2))-methyltransferase</fullName>
    </alternativeName>
    <alternativeName>
        <fullName evidence="1">23S rRNA m2A2503 methyltransferase</fullName>
    </alternativeName>
    <alternativeName>
        <fullName evidence="1">Ribosomal RNA large subunit methyltransferase N</fullName>
    </alternativeName>
    <alternativeName>
        <fullName evidence="1">tRNA (adenine(37)-C(2))-methyltransferase</fullName>
    </alternativeName>
    <alternativeName>
        <fullName evidence="1">tRNA m2A37 methyltransferase</fullName>
    </alternativeName>
</protein>
<reference key="1">
    <citation type="journal article" date="2006" name="J. Bacteriol.">
        <title>Genome sequence of Aeromonas hydrophila ATCC 7966T: jack of all trades.</title>
        <authorList>
            <person name="Seshadri R."/>
            <person name="Joseph S.W."/>
            <person name="Chopra A.K."/>
            <person name="Sha J."/>
            <person name="Shaw J."/>
            <person name="Graf J."/>
            <person name="Haft D.H."/>
            <person name="Wu M."/>
            <person name="Ren Q."/>
            <person name="Rosovitz M.J."/>
            <person name="Madupu R."/>
            <person name="Tallon L."/>
            <person name="Kim M."/>
            <person name="Jin S."/>
            <person name="Vuong H."/>
            <person name="Stine O.C."/>
            <person name="Ali A."/>
            <person name="Horneman A.J."/>
            <person name="Heidelberg J.F."/>
        </authorList>
    </citation>
    <scope>NUCLEOTIDE SEQUENCE [LARGE SCALE GENOMIC DNA]</scope>
    <source>
        <strain>ATCC 7966 / DSM 30187 / BCRC 13018 / CCUG 14551 / JCM 1027 / KCTC 2358 / NCIMB 9240 / NCTC 8049</strain>
    </source>
</reference>